<reference key="1">
    <citation type="submission" date="2003-03" db="EMBL/GenBank/DDBJ databases">
        <authorList>
            <consortium name="NIH - Zebrafish Gene Collection (ZGC) project"/>
        </authorList>
    </citation>
    <scope>NUCLEOTIDE SEQUENCE [LARGE SCALE MRNA]</scope>
    <source>
        <strain>SJD</strain>
    </source>
</reference>
<reference key="2">
    <citation type="journal article" date="2015" name="J. Cell Sci.">
        <title>CDK9 and its repressor LARP7 modulate cardiomyocyte proliferation and response to injury in the zebrafish heart.</title>
        <authorList>
            <person name="Matrone G."/>
            <person name="Wilson K.S."/>
            <person name="Maqsood S."/>
            <person name="Mullins J.J."/>
            <person name="Tucker C.S."/>
            <person name="Denvir M.A."/>
        </authorList>
    </citation>
    <scope>FUNCTION</scope>
    <scope>DISRUPTION PHENOTYPE</scope>
    <scope>DEVELOPMENTAL STAGE</scope>
</reference>
<sequence>MKVCQRKTIDTEKMSSVGDTACADLSEKKDNEKKKRSRVKQLLSDVKKQVEFWFGDVNLHKDRFMKSIIEQSRDGYIDIAVLTTFNRMKNLTADVKLIARALKNSTIVEVNDEGTRIRRKEPLGETPKDVDSRTVYVELLPKTVTHIWLERVFSKCGHVVYISIPRYKSTRHSKGFAFVEFETQEQAQKAVEMLNNPPEDAPRKPGIFPKTCRKKAVPFDAVTQDNDEDGKKKKTELKNSTSEETGSNNMDQDGMLESTVTSEPNLATLTSTVSKKAKKKRLRSQSFEASSGEDQFEMSSKMRKVEEEKSELKDLSSENKDEELNSLKKKDDSVLKAKRKRKKKLKERLKVGEEVIPLRVLSKKEWLDLKQEYLTLQKRCMAHLKQSVFQINQKPTNYHIVKLKEDDTNAFYKDTPKKELTSGPEFLSGVIVKISYNQPLPSKRCIKDMLSELSPVAYVDLLDGDTEGHVRFKSSEDAQKVIKARFEFQKKYNWNLELLSGDHERRYWQKILVDRQAKLNTPREKKRGTEKLISKAEKIIIAKAKEASNHIRFDD</sequence>
<name>LARP7_DANRE</name>
<dbReference type="EMBL" id="BC049455">
    <property type="protein sequence ID" value="AAH49455.1"/>
    <property type="molecule type" value="mRNA"/>
</dbReference>
<dbReference type="RefSeq" id="NP_956224.1">
    <property type="nucleotide sequence ID" value="NM_199930.2"/>
</dbReference>
<dbReference type="SMR" id="Q7ZWE3"/>
<dbReference type="FunCoup" id="Q7ZWE3">
    <property type="interactions" value="728"/>
</dbReference>
<dbReference type="STRING" id="7955.ENSDARP00000092507"/>
<dbReference type="PaxDb" id="7955-ENSDARP00000013520"/>
<dbReference type="GeneID" id="334956"/>
<dbReference type="KEGG" id="dre:334956"/>
<dbReference type="AGR" id="ZFIN:ZDB-GENE-030131-6896"/>
<dbReference type="CTD" id="51574"/>
<dbReference type="ZFIN" id="ZDB-GENE-030131-6896">
    <property type="gene designation" value="larp7"/>
</dbReference>
<dbReference type="eggNOG" id="KOG0118">
    <property type="taxonomic scope" value="Eukaryota"/>
</dbReference>
<dbReference type="InParanoid" id="Q7ZWE3"/>
<dbReference type="OrthoDB" id="439993at2759"/>
<dbReference type="PhylomeDB" id="Q7ZWE3"/>
<dbReference type="PRO" id="PR:Q7ZWE3"/>
<dbReference type="Proteomes" id="UP000000437">
    <property type="component" value="Chromosome 7"/>
</dbReference>
<dbReference type="GO" id="GO:0005654">
    <property type="term" value="C:nucleoplasm"/>
    <property type="evidence" value="ECO:0007669"/>
    <property type="project" value="UniProtKB-SubCell"/>
</dbReference>
<dbReference type="GO" id="GO:0005634">
    <property type="term" value="C:nucleus"/>
    <property type="evidence" value="ECO:0000250"/>
    <property type="project" value="UniProtKB"/>
</dbReference>
<dbReference type="GO" id="GO:1990904">
    <property type="term" value="C:ribonucleoprotein complex"/>
    <property type="evidence" value="ECO:0000250"/>
    <property type="project" value="UniProtKB"/>
</dbReference>
<dbReference type="GO" id="GO:0097322">
    <property type="term" value="F:7SK snRNA binding"/>
    <property type="evidence" value="ECO:0000250"/>
    <property type="project" value="UniProtKB"/>
</dbReference>
<dbReference type="GO" id="GO:0003723">
    <property type="term" value="F:RNA binding"/>
    <property type="evidence" value="ECO:0000318"/>
    <property type="project" value="GO_Central"/>
</dbReference>
<dbReference type="GO" id="GO:0017070">
    <property type="term" value="F:U6 snRNA binding"/>
    <property type="evidence" value="ECO:0000250"/>
    <property type="project" value="UniProtKB"/>
</dbReference>
<dbReference type="GO" id="GO:0000494">
    <property type="term" value="P:box C/D sno(s)RNA 3'-end processing"/>
    <property type="evidence" value="ECO:0000250"/>
    <property type="project" value="UniProtKB"/>
</dbReference>
<dbReference type="GO" id="GO:0061026">
    <property type="term" value="P:cardiac muscle tissue regeneration"/>
    <property type="evidence" value="ECO:0000316"/>
    <property type="project" value="ZFIN"/>
</dbReference>
<dbReference type="GO" id="GO:0030154">
    <property type="term" value="P:cell differentiation"/>
    <property type="evidence" value="ECO:0007669"/>
    <property type="project" value="UniProtKB-KW"/>
</dbReference>
<dbReference type="GO" id="GO:0006397">
    <property type="term" value="P:mRNA processing"/>
    <property type="evidence" value="ECO:0007669"/>
    <property type="project" value="UniProtKB-KW"/>
</dbReference>
<dbReference type="GO" id="GO:1904871">
    <property type="term" value="P:positive regulation of protein localization to Cajal body"/>
    <property type="evidence" value="ECO:0000250"/>
    <property type="project" value="UniProtKB"/>
</dbReference>
<dbReference type="GO" id="GO:1905382">
    <property type="term" value="P:positive regulation of snRNA transcription by RNA polymerase II"/>
    <property type="evidence" value="ECO:0000250"/>
    <property type="project" value="UniProtKB"/>
</dbReference>
<dbReference type="GO" id="GO:0060043">
    <property type="term" value="P:regulation of cardiac muscle cell proliferation"/>
    <property type="evidence" value="ECO:0000316"/>
    <property type="project" value="ZFIN"/>
</dbReference>
<dbReference type="GO" id="GO:0048024">
    <property type="term" value="P:regulation of mRNA splicing, via spliceosome"/>
    <property type="evidence" value="ECO:0000250"/>
    <property type="project" value="UniProtKB"/>
</dbReference>
<dbReference type="GO" id="GO:0008380">
    <property type="term" value="P:RNA splicing"/>
    <property type="evidence" value="ECO:0007669"/>
    <property type="project" value="UniProtKB-KW"/>
</dbReference>
<dbReference type="GO" id="GO:0007283">
    <property type="term" value="P:spermatogenesis"/>
    <property type="evidence" value="ECO:0000250"/>
    <property type="project" value="UniProtKB"/>
</dbReference>
<dbReference type="GO" id="GO:1990438">
    <property type="term" value="P:U6 2'-O-snRNA methylation"/>
    <property type="evidence" value="ECO:0000250"/>
    <property type="project" value="UniProtKB"/>
</dbReference>
<dbReference type="CDD" id="cd12290">
    <property type="entry name" value="RRM1_LARP7"/>
    <property type="match status" value="1"/>
</dbReference>
<dbReference type="CDD" id="cd12542">
    <property type="entry name" value="RRM2_LARP7"/>
    <property type="match status" value="1"/>
</dbReference>
<dbReference type="FunFam" id="1.10.10.10:FF:000158">
    <property type="entry name" value="La ribonucleoprotein domain family member 7"/>
    <property type="match status" value="1"/>
</dbReference>
<dbReference type="Gene3D" id="3.30.70.330">
    <property type="match status" value="2"/>
</dbReference>
<dbReference type="Gene3D" id="1.10.10.10">
    <property type="entry name" value="Winged helix-like DNA-binding domain superfamily/Winged helix DNA-binding domain"/>
    <property type="match status" value="1"/>
</dbReference>
<dbReference type="InterPro" id="IPR045180">
    <property type="entry name" value="La_dom_prot"/>
</dbReference>
<dbReference type="InterPro" id="IPR006630">
    <property type="entry name" value="La_HTH"/>
</dbReference>
<dbReference type="InterPro" id="IPR014886">
    <property type="entry name" value="La_xRRM"/>
</dbReference>
<dbReference type="InterPro" id="IPR034887">
    <property type="entry name" value="LARP7_RRM1"/>
</dbReference>
<dbReference type="InterPro" id="IPR034910">
    <property type="entry name" value="LARP7_RRM2"/>
</dbReference>
<dbReference type="InterPro" id="IPR002344">
    <property type="entry name" value="Lupus_La"/>
</dbReference>
<dbReference type="InterPro" id="IPR012677">
    <property type="entry name" value="Nucleotide-bd_a/b_plait_sf"/>
</dbReference>
<dbReference type="InterPro" id="IPR035979">
    <property type="entry name" value="RBD_domain_sf"/>
</dbReference>
<dbReference type="InterPro" id="IPR000504">
    <property type="entry name" value="RRM_dom"/>
</dbReference>
<dbReference type="InterPro" id="IPR036388">
    <property type="entry name" value="WH-like_DNA-bd_sf"/>
</dbReference>
<dbReference type="InterPro" id="IPR036390">
    <property type="entry name" value="WH_DNA-bd_sf"/>
</dbReference>
<dbReference type="PANTHER" id="PTHR22792:SF62">
    <property type="entry name" value="LA-RELATED PROTEIN 7"/>
    <property type="match status" value="1"/>
</dbReference>
<dbReference type="PANTHER" id="PTHR22792">
    <property type="entry name" value="LUPUS LA PROTEIN-RELATED"/>
    <property type="match status" value="1"/>
</dbReference>
<dbReference type="Pfam" id="PF05383">
    <property type="entry name" value="La"/>
    <property type="match status" value="1"/>
</dbReference>
<dbReference type="Pfam" id="PF00076">
    <property type="entry name" value="RRM_1"/>
    <property type="match status" value="1"/>
</dbReference>
<dbReference type="Pfam" id="PF08777">
    <property type="entry name" value="RRM_3"/>
    <property type="match status" value="1"/>
</dbReference>
<dbReference type="PRINTS" id="PR00302">
    <property type="entry name" value="LUPUSLA"/>
</dbReference>
<dbReference type="SMART" id="SM00715">
    <property type="entry name" value="LA"/>
    <property type="match status" value="1"/>
</dbReference>
<dbReference type="SMART" id="SM00360">
    <property type="entry name" value="RRM"/>
    <property type="match status" value="1"/>
</dbReference>
<dbReference type="SUPFAM" id="SSF54928">
    <property type="entry name" value="RNA-binding domain, RBD"/>
    <property type="match status" value="1"/>
</dbReference>
<dbReference type="SUPFAM" id="SSF46785">
    <property type="entry name" value="Winged helix' DNA-binding domain"/>
    <property type="match status" value="1"/>
</dbReference>
<dbReference type="PROSITE" id="PS50961">
    <property type="entry name" value="HTH_LA"/>
    <property type="match status" value="1"/>
</dbReference>
<dbReference type="PROSITE" id="PS50102">
    <property type="entry name" value="RRM"/>
    <property type="match status" value="1"/>
</dbReference>
<dbReference type="PROSITE" id="PS51939">
    <property type="entry name" value="XRRM"/>
    <property type="match status" value="1"/>
</dbReference>
<proteinExistence type="evidence at transcript level"/>
<gene>
    <name evidence="1" type="primary">larp7</name>
    <name evidence="8" type="ORF">zgc:56476</name>
</gene>
<organism>
    <name type="scientific">Danio rerio</name>
    <name type="common">Zebrafish</name>
    <name type="synonym">Brachydanio rerio</name>
    <dbReference type="NCBI Taxonomy" id="7955"/>
    <lineage>
        <taxon>Eukaryota</taxon>
        <taxon>Metazoa</taxon>
        <taxon>Chordata</taxon>
        <taxon>Craniata</taxon>
        <taxon>Vertebrata</taxon>
        <taxon>Euteleostomi</taxon>
        <taxon>Actinopterygii</taxon>
        <taxon>Neopterygii</taxon>
        <taxon>Teleostei</taxon>
        <taxon>Ostariophysi</taxon>
        <taxon>Cypriniformes</taxon>
        <taxon>Danionidae</taxon>
        <taxon>Danioninae</taxon>
        <taxon>Danio</taxon>
    </lineage>
</organism>
<accession>Q7ZWE3</accession>
<comment type="function">
    <text evidence="1 7">RNA-binding protein that specifically binds distinct small nuclear RNA (snRNAs) and regulates their processing and function (PubMed:26542022). Specifically binds the 7SK snRNA (7SK RNA) and acts as a core component of the 7SK ribonucleoprotein (RNP) complex, thereby acting as a negative regulator of transcription elongation by RNA polymerase II (PubMed:26542022). The 7SK RNP complex sequesters the positive transcription elongation factor b (P-TEFb) in a large inactive 7SK RNP complex preventing RNA polymerase II phosphorylation and subsequent transcriptional elongation (PubMed:26542022). The 7SK RNP complex also promotes snRNA gene transcription by RNA polymerase II via interaction with the little elongation complex (LEC) (By similarity). LARP7 specifically binds to the highly conserved 3'-terminal U-rich stretch of 7SK RNA; on stimulation, remains associated with 7SK RNA, whereas P-TEFb is released from the complex (By similarity). LARP7 also acts as a regulator of mRNA splicing fidelity by promoting U6 snRNA processing. Specifically binds U6 snRNAs and associates with a subset of box C/D RNP complexes: promotes U6 snRNA 2'-O-methylation by facilitating U6 snRNA loading into box C/D RNP complexes (By similarity). U6 snRNA 2'-O-methylation is required for mRNA splicing fidelity (By similarity).</text>
</comment>
<comment type="subunit">
    <text evidence="1">Core component of the 7SK RNP complex. Associates with box C/D small nucleolar ribonucleoprotein (snoRNP) complexes.</text>
</comment>
<comment type="subcellular location">
    <subcellularLocation>
        <location evidence="1">Nucleus</location>
        <location evidence="1">Nucleoplasm</location>
    </subcellularLocation>
</comment>
<comment type="developmental stage">
    <text evidence="7">Expression reaches a peak at 48 hours post-fertilization (hpf) and then decreases at 72, 96 and 120 hpf (PubMed:26542022). In embryonic hearts, expression slightly increases between 48 and 96 hpf, and then decreases at 120 hpf (PubMed:26542022). Expressed in the adult heart (PubMed:26542022).</text>
</comment>
<comment type="domain">
    <text evidence="1">The xRRM domain binds the 3' end of 7SK snRNA (7SK RNA) at the top of stem-loop 4.</text>
</comment>
<comment type="disruption phenotype">
    <text evidence="7">Mild cardiac phenotype with increased phosphorylation of 'Ser-2' on RNA polymerase II.</text>
</comment>
<comment type="similarity">
    <text evidence="9">Belongs to the LARP7 family.</text>
</comment>
<evidence type="ECO:0000250" key="1">
    <source>
        <dbReference type="UniProtKB" id="Q4G0J3"/>
    </source>
</evidence>
<evidence type="ECO:0000255" key="2"/>
<evidence type="ECO:0000255" key="3">
    <source>
        <dbReference type="PROSITE-ProRule" id="PRU00176"/>
    </source>
</evidence>
<evidence type="ECO:0000255" key="4">
    <source>
        <dbReference type="PROSITE-ProRule" id="PRU00332"/>
    </source>
</evidence>
<evidence type="ECO:0000255" key="5">
    <source>
        <dbReference type="PROSITE-ProRule" id="PRU01288"/>
    </source>
</evidence>
<evidence type="ECO:0000256" key="6">
    <source>
        <dbReference type="SAM" id="MobiDB-lite"/>
    </source>
</evidence>
<evidence type="ECO:0000269" key="7">
    <source>
    </source>
</evidence>
<evidence type="ECO:0000303" key="8">
    <source ref="1"/>
</evidence>
<evidence type="ECO:0000305" key="9"/>
<feature type="chain" id="PRO_0000281680" description="La-related protein 7">
    <location>
        <begin position="1"/>
        <end position="555"/>
    </location>
</feature>
<feature type="domain" description="HTH La-type RNA-binding" evidence="4">
    <location>
        <begin position="36"/>
        <end position="127"/>
    </location>
</feature>
<feature type="domain" description="RRM" evidence="3">
    <location>
        <begin position="133"/>
        <end position="211"/>
    </location>
</feature>
<feature type="domain" description="xRRM" evidence="5">
    <location>
        <begin position="425"/>
        <end position="538"/>
    </location>
</feature>
<feature type="region of interest" description="Disordered" evidence="6">
    <location>
        <begin position="218"/>
        <end position="327"/>
    </location>
</feature>
<feature type="coiled-coil region" evidence="2">
    <location>
        <begin position="295"/>
        <end position="356"/>
    </location>
</feature>
<feature type="compositionally biased region" description="Polar residues" evidence="6">
    <location>
        <begin position="238"/>
        <end position="251"/>
    </location>
</feature>
<feature type="compositionally biased region" description="Polar residues" evidence="6">
    <location>
        <begin position="258"/>
        <end position="274"/>
    </location>
</feature>
<feature type="compositionally biased region" description="Polar residues" evidence="6">
    <location>
        <begin position="284"/>
        <end position="293"/>
    </location>
</feature>
<feature type="compositionally biased region" description="Basic and acidic residues" evidence="6">
    <location>
        <begin position="303"/>
        <end position="327"/>
    </location>
</feature>
<protein>
    <recommendedName>
        <fullName evidence="1">La-related protein 7</fullName>
    </recommendedName>
    <alternativeName>
        <fullName evidence="1">La ribonucleoprotein domain family member 7</fullName>
    </alternativeName>
</protein>
<keyword id="KW-0175">Coiled coil</keyword>
<keyword id="KW-0221">Differentiation</keyword>
<keyword id="KW-0507">mRNA processing</keyword>
<keyword id="KW-0508">mRNA splicing</keyword>
<keyword id="KW-0539">Nucleus</keyword>
<keyword id="KW-1185">Reference proteome</keyword>
<keyword id="KW-0694">RNA-binding</keyword>
<keyword id="KW-0744">Spermatogenesis</keyword>
<keyword id="KW-0804">Transcription</keyword>
<keyword id="KW-0805">Transcription regulation</keyword>